<protein>
    <recommendedName>
        <fullName>Conotoxin Vc6.9</fullName>
    </recommendedName>
</protein>
<reference key="1">
    <citation type="journal article" date="2011" name="J. Biol. Chem.">
        <title>Embryonic toxin expression in the cone snail Conus victoriae: primed to kill or divergent function?</title>
        <authorList>
            <person name="Safavi-Hemami H."/>
            <person name="Siero W.A."/>
            <person name="Kuang Z."/>
            <person name="Williamson N.A."/>
            <person name="Karas J.A."/>
            <person name="Page L.R."/>
            <person name="Macmillan D."/>
            <person name="Callaghan B."/>
            <person name="Kompella S.N."/>
            <person name="Adams D.J."/>
            <person name="Norton R.S."/>
            <person name="Purcell A.W."/>
        </authorList>
    </citation>
    <scope>NUCLEOTIDE SEQUENCE [MRNA]</scope>
    <scope>DEVELOPMENTAL STAGE</scope>
    <source>
        <tissue>Embryo</tissue>
        <tissue>Venom duct</tissue>
    </source>
</reference>
<evidence type="ECO:0000250" key="1"/>
<evidence type="ECO:0000255" key="2"/>
<evidence type="ECO:0000269" key="3">
    <source>
    </source>
</evidence>
<evidence type="ECO:0000305" key="4"/>
<comment type="function">
    <text evidence="1">Inhibits voltage-gated ion channels.</text>
</comment>
<comment type="subcellular location">
    <subcellularLocation>
        <location evidence="1">Secreted</location>
    </subcellularLocation>
</comment>
<comment type="tissue specificity">
    <text>Expressed by the venom duct.</text>
</comment>
<comment type="developmental stage">
    <text evidence="3">Only expressed in adults.</text>
</comment>
<comment type="domain">
    <text evidence="1">The presence of a 'disulfide through disulfide knot' structurally defines this protein as a knottin.</text>
</comment>
<comment type="domain">
    <text>The cysteine framework is VI/VII (C-C-CC-C-C).</text>
</comment>
<comment type="similarity">
    <text evidence="4">Belongs to the conotoxin O2 superfamily.</text>
</comment>
<name>O269_CONVC</name>
<proteinExistence type="evidence at transcript level"/>
<sequence>MEKLTILLLVAAVLMSTQALMQEQRQKAKINLFSKRKPSAERRWVDVGCTFLLGSCTADAECCSDNCVETYCDLWW</sequence>
<accession>G1AS75</accession>
<dbReference type="EMBL" id="JF433902">
    <property type="protein sequence ID" value="AEA35358.1"/>
    <property type="molecule type" value="mRNA"/>
</dbReference>
<dbReference type="SMR" id="G1AS75"/>
<dbReference type="ConoServer" id="4270">
    <property type="toxin name" value="Vc6.9 precursor"/>
</dbReference>
<dbReference type="GO" id="GO:0005576">
    <property type="term" value="C:extracellular region"/>
    <property type="evidence" value="ECO:0007669"/>
    <property type="project" value="UniProtKB-SubCell"/>
</dbReference>
<dbReference type="GO" id="GO:0008200">
    <property type="term" value="F:ion channel inhibitor activity"/>
    <property type="evidence" value="ECO:0007669"/>
    <property type="project" value="InterPro"/>
</dbReference>
<dbReference type="GO" id="GO:0090729">
    <property type="term" value="F:toxin activity"/>
    <property type="evidence" value="ECO:0007669"/>
    <property type="project" value="UniProtKB-KW"/>
</dbReference>
<dbReference type="InterPro" id="IPR004214">
    <property type="entry name" value="Conotoxin"/>
</dbReference>
<dbReference type="Pfam" id="PF02950">
    <property type="entry name" value="Conotoxin"/>
    <property type="match status" value="1"/>
</dbReference>
<feature type="signal peptide" evidence="2">
    <location>
        <begin position="1"/>
        <end position="19"/>
    </location>
</feature>
<feature type="propeptide" id="PRO_0000425167" evidence="1">
    <location>
        <begin position="20"/>
        <end position="41"/>
    </location>
</feature>
<feature type="peptide" id="PRO_0000425168" description="Conotoxin Vc6.9">
    <location>
        <begin position="44"/>
        <end position="76"/>
    </location>
</feature>
<feature type="disulfide bond" evidence="1">
    <location>
        <begin position="49"/>
        <end position="63"/>
    </location>
</feature>
<feature type="disulfide bond" evidence="1">
    <location>
        <begin position="56"/>
        <end position="67"/>
    </location>
</feature>
<feature type="disulfide bond" evidence="1">
    <location>
        <begin position="62"/>
        <end position="72"/>
    </location>
</feature>
<keyword id="KW-0165">Cleavage on pair of basic residues</keyword>
<keyword id="KW-1015">Disulfide bond</keyword>
<keyword id="KW-0872">Ion channel impairing toxin</keyword>
<keyword id="KW-0960">Knottin</keyword>
<keyword id="KW-0964">Secreted</keyword>
<keyword id="KW-0732">Signal</keyword>
<keyword id="KW-0800">Toxin</keyword>
<organism>
    <name type="scientific">Conus victoriae</name>
    <name type="common">Queen Victoria cone</name>
    <dbReference type="NCBI Taxonomy" id="319920"/>
    <lineage>
        <taxon>Eukaryota</taxon>
        <taxon>Metazoa</taxon>
        <taxon>Spiralia</taxon>
        <taxon>Lophotrochozoa</taxon>
        <taxon>Mollusca</taxon>
        <taxon>Gastropoda</taxon>
        <taxon>Caenogastropoda</taxon>
        <taxon>Neogastropoda</taxon>
        <taxon>Conoidea</taxon>
        <taxon>Conidae</taxon>
        <taxon>Conus</taxon>
        <taxon>Cylinder</taxon>
    </lineage>
</organism>